<comment type="function">
    <text evidence="1">Nuclear serine protease which mediates apoptosis.</text>
</comment>
<comment type="subcellular location">
    <subcellularLocation>
        <location evidence="1">Nucleus</location>
    </subcellularLocation>
</comment>
<comment type="similarity">
    <text evidence="4">Belongs to the peptidase S1C family.</text>
</comment>
<gene>
    <name type="primary">NMA111</name>
    <name type="ordered locus">DEHA2F20768g</name>
</gene>
<evidence type="ECO:0000250" key="1"/>
<evidence type="ECO:0000255" key="2"/>
<evidence type="ECO:0000256" key="3">
    <source>
        <dbReference type="SAM" id="MobiDB-lite"/>
    </source>
</evidence>
<evidence type="ECO:0000305" key="4"/>
<dbReference type="EC" id="3.4.21.-"/>
<dbReference type="EMBL" id="CR382138">
    <property type="protein sequence ID" value="CAR66382.1"/>
    <property type="molecule type" value="Genomic_DNA"/>
</dbReference>
<dbReference type="RefSeq" id="XP_002770862.1">
    <property type="nucleotide sequence ID" value="XM_002770816.1"/>
</dbReference>
<dbReference type="SMR" id="Q6BKM0"/>
<dbReference type="FunCoup" id="Q6BKM0">
    <property type="interactions" value="135"/>
</dbReference>
<dbReference type="STRING" id="284592.Q6BKM0"/>
<dbReference type="GeneID" id="8999024"/>
<dbReference type="KEGG" id="dha:DEHA2F20768g"/>
<dbReference type="VEuPathDB" id="FungiDB:DEHA2F20768g"/>
<dbReference type="eggNOG" id="KOG1421">
    <property type="taxonomic scope" value="Eukaryota"/>
</dbReference>
<dbReference type="HOGENOM" id="CLU_003212_0_0_1"/>
<dbReference type="InParanoid" id="Q6BKM0"/>
<dbReference type="OMA" id="FWGHCVF"/>
<dbReference type="OrthoDB" id="4217619at2759"/>
<dbReference type="Proteomes" id="UP000000599">
    <property type="component" value="Chromosome F"/>
</dbReference>
<dbReference type="GO" id="GO:0005634">
    <property type="term" value="C:nucleus"/>
    <property type="evidence" value="ECO:0007669"/>
    <property type="project" value="UniProtKB-SubCell"/>
</dbReference>
<dbReference type="GO" id="GO:0004252">
    <property type="term" value="F:serine-type endopeptidase activity"/>
    <property type="evidence" value="ECO:0007669"/>
    <property type="project" value="EnsemblFungi"/>
</dbReference>
<dbReference type="GO" id="GO:0006915">
    <property type="term" value="P:apoptotic process"/>
    <property type="evidence" value="ECO:0007669"/>
    <property type="project" value="UniProtKB-KW"/>
</dbReference>
<dbReference type="GO" id="GO:0034605">
    <property type="term" value="P:cellular response to heat"/>
    <property type="evidence" value="ECO:0007669"/>
    <property type="project" value="EnsemblFungi"/>
</dbReference>
<dbReference type="GO" id="GO:0006629">
    <property type="term" value="P:lipid metabolic process"/>
    <property type="evidence" value="ECO:0007669"/>
    <property type="project" value="EnsemblFungi"/>
</dbReference>
<dbReference type="GO" id="GO:0120174">
    <property type="term" value="P:stress-induced homeostatically regulated protein degradation pathway"/>
    <property type="evidence" value="ECO:0007669"/>
    <property type="project" value="EnsemblFungi"/>
</dbReference>
<dbReference type="CDD" id="cd06786">
    <property type="entry name" value="cpPDZ1_ScNma111-like"/>
    <property type="match status" value="1"/>
</dbReference>
<dbReference type="CDD" id="cd10827">
    <property type="entry name" value="cpPDZ3_ScNma111-like"/>
    <property type="match status" value="1"/>
</dbReference>
<dbReference type="CDD" id="cd06719">
    <property type="entry name" value="PDZ2-4_Nma111p-like"/>
    <property type="match status" value="1"/>
</dbReference>
<dbReference type="FunFam" id="2.40.10.120:FF:000013">
    <property type="entry name" value="Pro-apoptotic serine protease NMA111"/>
    <property type="match status" value="1"/>
</dbReference>
<dbReference type="Gene3D" id="2.30.42.10">
    <property type="match status" value="2"/>
</dbReference>
<dbReference type="Gene3D" id="2.40.10.120">
    <property type="match status" value="1"/>
</dbReference>
<dbReference type="Gene3D" id="2.40.10.10">
    <property type="entry name" value="Trypsin-like serine proteases"/>
    <property type="match status" value="2"/>
</dbReference>
<dbReference type="InterPro" id="IPR001478">
    <property type="entry name" value="PDZ"/>
</dbReference>
<dbReference type="InterPro" id="IPR025926">
    <property type="entry name" value="PDZ-like_dom"/>
</dbReference>
<dbReference type="InterPro" id="IPR041489">
    <property type="entry name" value="PDZ_6"/>
</dbReference>
<dbReference type="InterPro" id="IPR036034">
    <property type="entry name" value="PDZ_sf"/>
</dbReference>
<dbReference type="InterPro" id="IPR009003">
    <property type="entry name" value="Peptidase_S1_PA"/>
</dbReference>
<dbReference type="InterPro" id="IPR043504">
    <property type="entry name" value="Peptidase_S1_PA_chymotrypsin"/>
</dbReference>
<dbReference type="InterPro" id="IPR001940">
    <property type="entry name" value="Peptidase_S1C"/>
</dbReference>
<dbReference type="PANTHER" id="PTHR46366">
    <property type="entry name" value="PRO-APOPTOTIC SERINE PROTEASE NMA111"/>
    <property type="match status" value="1"/>
</dbReference>
<dbReference type="PANTHER" id="PTHR46366:SF8">
    <property type="entry name" value="PRO-APOPTOTIC SERINE PROTEASE NMA111"/>
    <property type="match status" value="1"/>
</dbReference>
<dbReference type="Pfam" id="PF12812">
    <property type="entry name" value="PDZ_1"/>
    <property type="match status" value="2"/>
</dbReference>
<dbReference type="Pfam" id="PF17820">
    <property type="entry name" value="PDZ_6"/>
    <property type="match status" value="1"/>
</dbReference>
<dbReference type="Pfam" id="PF13365">
    <property type="entry name" value="Trypsin_2"/>
    <property type="match status" value="1"/>
</dbReference>
<dbReference type="PRINTS" id="PR00834">
    <property type="entry name" value="PROTEASES2C"/>
</dbReference>
<dbReference type="SMART" id="SM00228">
    <property type="entry name" value="PDZ"/>
    <property type="match status" value="3"/>
</dbReference>
<dbReference type="SUPFAM" id="SSF50156">
    <property type="entry name" value="PDZ domain-like"/>
    <property type="match status" value="3"/>
</dbReference>
<dbReference type="SUPFAM" id="SSF50494">
    <property type="entry name" value="Trypsin-like serine proteases"/>
    <property type="match status" value="2"/>
</dbReference>
<name>NM111_DEBHA</name>
<keyword id="KW-0053">Apoptosis</keyword>
<keyword id="KW-0378">Hydrolase</keyword>
<keyword id="KW-0539">Nucleus</keyword>
<keyword id="KW-0645">Protease</keyword>
<keyword id="KW-1185">Reference proteome</keyword>
<keyword id="KW-0677">Repeat</keyword>
<keyword id="KW-0720">Serine protease</keyword>
<accession>Q6BKM0</accession>
<accession>B5RUK4</accession>
<organism>
    <name type="scientific">Debaryomyces hansenii (strain ATCC 36239 / CBS 767 / BCRC 21394 / JCM 1990 / NBRC 0083 / IGC 2968)</name>
    <name type="common">Yeast</name>
    <name type="synonym">Torulaspora hansenii</name>
    <dbReference type="NCBI Taxonomy" id="284592"/>
    <lineage>
        <taxon>Eukaryota</taxon>
        <taxon>Fungi</taxon>
        <taxon>Dikarya</taxon>
        <taxon>Ascomycota</taxon>
        <taxon>Saccharomycotina</taxon>
        <taxon>Pichiomycetes</taxon>
        <taxon>Debaryomycetaceae</taxon>
        <taxon>Debaryomyces</taxon>
    </lineage>
</organism>
<protein>
    <recommendedName>
        <fullName>Pro-apoptotic serine protease NMA111</fullName>
        <ecNumber>3.4.21.-</ecNumber>
    </recommendedName>
</protein>
<feature type="chain" id="PRO_0000320352" description="Pro-apoptotic serine protease NMA111">
    <location>
        <begin position="1"/>
        <end position="987"/>
    </location>
</feature>
<feature type="domain" description="PDZ 1">
    <location>
        <begin position="279"/>
        <end position="364"/>
    </location>
</feature>
<feature type="domain" description="PDZ 2">
    <location>
        <begin position="878"/>
        <end position="950"/>
    </location>
</feature>
<feature type="region of interest" description="Disordered" evidence="3">
    <location>
        <begin position="1"/>
        <end position="29"/>
    </location>
</feature>
<feature type="region of interest" description="Serine protease">
    <location>
        <begin position="69"/>
        <end position="262"/>
    </location>
</feature>
<feature type="compositionally biased region" description="Polar residues" evidence="3">
    <location>
        <begin position="11"/>
        <end position="28"/>
    </location>
</feature>
<feature type="active site" description="Charge relay system" evidence="2">
    <location>
        <position position="110"/>
    </location>
</feature>
<feature type="active site" description="Charge relay system" evidence="2">
    <location>
        <position position="141"/>
    </location>
</feature>
<feature type="active site" description="Charge relay system" evidence="2">
    <location>
        <position position="224"/>
    </location>
</feature>
<proteinExistence type="inferred from homology"/>
<reference key="1">
    <citation type="journal article" date="2004" name="Nature">
        <title>Genome evolution in yeasts.</title>
        <authorList>
            <person name="Dujon B."/>
            <person name="Sherman D."/>
            <person name="Fischer G."/>
            <person name="Durrens P."/>
            <person name="Casaregola S."/>
            <person name="Lafontaine I."/>
            <person name="de Montigny J."/>
            <person name="Marck C."/>
            <person name="Neuveglise C."/>
            <person name="Talla E."/>
            <person name="Goffard N."/>
            <person name="Frangeul L."/>
            <person name="Aigle M."/>
            <person name="Anthouard V."/>
            <person name="Babour A."/>
            <person name="Barbe V."/>
            <person name="Barnay S."/>
            <person name="Blanchin S."/>
            <person name="Beckerich J.-M."/>
            <person name="Beyne E."/>
            <person name="Bleykasten C."/>
            <person name="Boisrame A."/>
            <person name="Boyer J."/>
            <person name="Cattolico L."/>
            <person name="Confanioleri F."/>
            <person name="de Daruvar A."/>
            <person name="Despons L."/>
            <person name="Fabre E."/>
            <person name="Fairhead C."/>
            <person name="Ferry-Dumazet H."/>
            <person name="Groppi A."/>
            <person name="Hantraye F."/>
            <person name="Hennequin C."/>
            <person name="Jauniaux N."/>
            <person name="Joyet P."/>
            <person name="Kachouri R."/>
            <person name="Kerrest A."/>
            <person name="Koszul R."/>
            <person name="Lemaire M."/>
            <person name="Lesur I."/>
            <person name="Ma L."/>
            <person name="Muller H."/>
            <person name="Nicaud J.-M."/>
            <person name="Nikolski M."/>
            <person name="Oztas S."/>
            <person name="Ozier-Kalogeropoulos O."/>
            <person name="Pellenz S."/>
            <person name="Potier S."/>
            <person name="Richard G.-F."/>
            <person name="Straub M.-L."/>
            <person name="Suleau A."/>
            <person name="Swennen D."/>
            <person name="Tekaia F."/>
            <person name="Wesolowski-Louvel M."/>
            <person name="Westhof E."/>
            <person name="Wirth B."/>
            <person name="Zeniou-Meyer M."/>
            <person name="Zivanovic Y."/>
            <person name="Bolotin-Fukuhara M."/>
            <person name="Thierry A."/>
            <person name="Bouchier C."/>
            <person name="Caudron B."/>
            <person name="Scarpelli C."/>
            <person name="Gaillardin C."/>
            <person name="Weissenbach J."/>
            <person name="Wincker P."/>
            <person name="Souciet J.-L."/>
        </authorList>
    </citation>
    <scope>NUCLEOTIDE SEQUENCE [LARGE SCALE GENOMIC DNA]</scope>
    <source>
        <strain>ATCC 36239 / CBS 767 / BCRC 21394 / JCM 1990 / NBRC 0083 / IGC 2968</strain>
    </source>
</reference>
<sequence>MPDIPTKRRLSNGSVIDNTNKRQMQSSFVPEVEQESDGYLSEDSSDQPIFDMAVAANSNQWQETITKVVKSVVSIQFTHVSNFDTESSIVSEATGFVVDAKRGLILTNRHVVGPGPFCGYVVFDNHEEAVVKPIYRDPVHDFGFLQFDAKSIKYMDVTQLELKPDLAKVGTEIRVVGNDAGEKLSILAGFISRLDRNAPDYGALTYNDFNTEYIQAAASASGGSSGSPVVNEDGHAVAIQAGGSSEASTDFFLPVYRPLRALRCIQESQPITRGDIQVEWSLKPFDECRRLGLTSEAERIARERFPDKIGLLVAELVLPEGPADELIKEGDTLISINDEPISTFIKVDEILDESVGKELKVVIQRGGEEITQTIKIGDLHSITPDRYVDVAGASFNQMSYQVARCYCIPVKGVYINDASGSFEFSTFEKTGWLLETVDDKQTPDLDTFIEVMKQIPDRQKVTITYRHVSDLHTESIQVIYIERHWQSTFRLAVRNDKSGLWDFTDIQDKPLPPLKLEPQNAKYINIPFENEEKQGCASLVKSFVQVRTVAPVPMDSYPYRKEIGYGVVVDATNGYVLVSRRFVPHDMCDIFVIFAESVDIPGKVVFLHPNQNYAIIKYDPKLVLADVQAPKFSDKPLKRGEKSFFVGYNYNLRLVTEDVKVSGISSLNVPAASLSPRYRGTNLECVLLDSKLCQECDSGVLADEDGTLRSFWLSYLGESNCDQTTDRMYRMGLDVTDVLDVINKLKDNEIPVDLRILDAEFSSITILQGRTRGVPQKWINEFEKVCHDELKFLSVERVAAAKLNQTPNPLKIGDILLSVNGSIVKTMRDLKIMYNKPSLDFKIIRSKKEMDITVPTVETTSLNTSHVVFWCGAILQAPHHGVRQLMEKIPSEVYVTRKNSGGPAHQYGIVTNSFITHVNDKETKNLESFMDAITDIADNTYIKLRLVSFDNVPVAISVKTNYHYFPTAELKKNKETGEWKEIEHKEK</sequence>